<organism>
    <name type="scientific">Campylobacter jejuni subsp. jejuni serotype O:6 (strain 81116 / NCTC 11828)</name>
    <dbReference type="NCBI Taxonomy" id="407148"/>
    <lineage>
        <taxon>Bacteria</taxon>
        <taxon>Pseudomonadati</taxon>
        <taxon>Campylobacterota</taxon>
        <taxon>Epsilonproteobacteria</taxon>
        <taxon>Campylobacterales</taxon>
        <taxon>Campylobacteraceae</taxon>
        <taxon>Campylobacter</taxon>
    </lineage>
</organism>
<keyword id="KW-0963">Cytoplasm</keyword>
<keyword id="KW-0269">Exonuclease</keyword>
<keyword id="KW-0378">Hydrolase</keyword>
<keyword id="KW-0540">Nuclease</keyword>
<dbReference type="EC" id="3.1.11.6" evidence="1"/>
<dbReference type="EMBL" id="CP000814">
    <property type="protein sequence ID" value="ABV51901.1"/>
    <property type="molecule type" value="Genomic_DNA"/>
</dbReference>
<dbReference type="RefSeq" id="WP_002866657.1">
    <property type="nucleotide sequence ID" value="NC_009839.1"/>
</dbReference>
<dbReference type="SMR" id="A8FKB4"/>
<dbReference type="KEGG" id="cju:C8J_0302"/>
<dbReference type="HOGENOM" id="CLU_023625_2_0_7"/>
<dbReference type="GO" id="GO:0005737">
    <property type="term" value="C:cytoplasm"/>
    <property type="evidence" value="ECO:0007669"/>
    <property type="project" value="UniProtKB-SubCell"/>
</dbReference>
<dbReference type="GO" id="GO:0009318">
    <property type="term" value="C:exodeoxyribonuclease VII complex"/>
    <property type="evidence" value="ECO:0007669"/>
    <property type="project" value="InterPro"/>
</dbReference>
<dbReference type="GO" id="GO:0008855">
    <property type="term" value="F:exodeoxyribonuclease VII activity"/>
    <property type="evidence" value="ECO:0007669"/>
    <property type="project" value="UniProtKB-UniRule"/>
</dbReference>
<dbReference type="GO" id="GO:0003676">
    <property type="term" value="F:nucleic acid binding"/>
    <property type="evidence" value="ECO:0007669"/>
    <property type="project" value="InterPro"/>
</dbReference>
<dbReference type="GO" id="GO:0006308">
    <property type="term" value="P:DNA catabolic process"/>
    <property type="evidence" value="ECO:0007669"/>
    <property type="project" value="UniProtKB-UniRule"/>
</dbReference>
<dbReference type="CDD" id="cd04489">
    <property type="entry name" value="ExoVII_LU_OBF"/>
    <property type="match status" value="1"/>
</dbReference>
<dbReference type="HAMAP" id="MF_00378">
    <property type="entry name" value="Exonuc_7_L"/>
    <property type="match status" value="1"/>
</dbReference>
<dbReference type="InterPro" id="IPR003753">
    <property type="entry name" value="Exonuc_VII_L"/>
</dbReference>
<dbReference type="InterPro" id="IPR020579">
    <property type="entry name" value="Exonuc_VII_lsu_C"/>
</dbReference>
<dbReference type="InterPro" id="IPR025824">
    <property type="entry name" value="OB-fold_nuc-bd_dom"/>
</dbReference>
<dbReference type="NCBIfam" id="TIGR00237">
    <property type="entry name" value="xseA"/>
    <property type="match status" value="1"/>
</dbReference>
<dbReference type="PANTHER" id="PTHR30008">
    <property type="entry name" value="EXODEOXYRIBONUCLEASE 7 LARGE SUBUNIT"/>
    <property type="match status" value="1"/>
</dbReference>
<dbReference type="PANTHER" id="PTHR30008:SF0">
    <property type="entry name" value="EXODEOXYRIBONUCLEASE 7 LARGE SUBUNIT"/>
    <property type="match status" value="1"/>
</dbReference>
<dbReference type="Pfam" id="PF02601">
    <property type="entry name" value="Exonuc_VII_L"/>
    <property type="match status" value="1"/>
</dbReference>
<dbReference type="Pfam" id="PF13742">
    <property type="entry name" value="tRNA_anti_2"/>
    <property type="match status" value="1"/>
</dbReference>
<proteinExistence type="inferred from homology"/>
<feature type="chain" id="PRO_1000072160" description="Exodeoxyribonuclease 7 large subunit">
    <location>
        <begin position="1"/>
        <end position="387"/>
    </location>
</feature>
<name>EX7L_CAMJ8</name>
<gene>
    <name evidence="1" type="primary">xseA</name>
    <name type="ordered locus">C8J_0302</name>
</gene>
<comment type="function">
    <text evidence="1">Bidirectionally degrades single-stranded DNA into large acid-insoluble oligonucleotides, which are then degraded further into small acid-soluble oligonucleotides.</text>
</comment>
<comment type="catalytic activity">
    <reaction evidence="1">
        <text>Exonucleolytic cleavage in either 5'- to 3'- or 3'- to 5'-direction to yield nucleoside 5'-phosphates.</text>
        <dbReference type="EC" id="3.1.11.6"/>
    </reaction>
</comment>
<comment type="subunit">
    <text evidence="1">Heterooligomer composed of large and small subunits.</text>
</comment>
<comment type="subcellular location">
    <subcellularLocation>
        <location evidence="1">Cytoplasm</location>
    </subcellularLocation>
</comment>
<comment type="similarity">
    <text evidence="1">Belongs to the XseA family.</text>
</comment>
<accession>A8FKB4</accession>
<reference key="1">
    <citation type="journal article" date="2007" name="J. Bacteriol.">
        <title>The complete genome sequence of Campylobacter jejuni strain 81116 (NCTC11828).</title>
        <authorList>
            <person name="Pearson B.M."/>
            <person name="Gaskin D.J.H."/>
            <person name="Segers R.P.A.M."/>
            <person name="Wells J.M."/>
            <person name="Nuijten P.J.M."/>
            <person name="van Vliet A.H.M."/>
        </authorList>
    </citation>
    <scope>NUCLEOTIDE SEQUENCE [LARGE SCALE GENOMIC DNA]</scope>
    <source>
        <strain>81116 / NCTC 11828</strain>
    </source>
</reference>
<evidence type="ECO:0000255" key="1">
    <source>
        <dbReference type="HAMAP-Rule" id="MF_00378"/>
    </source>
</evidence>
<sequence>MTPTELNLKAKALLETHFEDIVLSGEISKITLHGSGHWYFDLKDERSSIACAMFKGANLKVGFKPAVGDFLELCGSVSLYPESGRYQFIATSMKKAGFGDLEAQFLALKERLQKEGLFDPLFKKSLPKFPKKVGIITSKTSAALQDMLKLIHQKEYFLAKIYIFDALTQGNNAPFSLIQALKKADDMDLDVLIIARGGGSREDLFCFNDENLAREIFKAKTPIISAIGHEIDYVISDFVADFRAPTPSAAIDTLFYSKLDIEQSLDLMEEKLMQLWNHKIQNYENLLLNLSKFFKFNSLPKIIDEKIKQSHNIEKQLNHLLANQMRYNELKLDKLQNAYLQHENFFNKSKKFICIRKNGKIANLEDLKSDDIVILSSQTSQKEAKIL</sequence>
<protein>
    <recommendedName>
        <fullName evidence="1">Exodeoxyribonuclease 7 large subunit</fullName>
        <ecNumber evidence="1">3.1.11.6</ecNumber>
    </recommendedName>
    <alternativeName>
        <fullName evidence="1">Exodeoxyribonuclease VII large subunit</fullName>
        <shortName evidence="1">Exonuclease VII large subunit</shortName>
    </alternativeName>
</protein>